<dbReference type="EC" id="7.1.1.-" evidence="1"/>
<dbReference type="EMBL" id="CP000668">
    <property type="protein sequence ID" value="ABP40341.1"/>
    <property type="molecule type" value="Genomic_DNA"/>
</dbReference>
<dbReference type="RefSeq" id="WP_002210273.1">
    <property type="nucleotide sequence ID" value="NZ_CP009715.1"/>
</dbReference>
<dbReference type="SMR" id="A4TM29"/>
<dbReference type="GeneID" id="96666079"/>
<dbReference type="KEGG" id="ypp:YPDSF_1958"/>
<dbReference type="PATRIC" id="fig|386656.14.peg.3423"/>
<dbReference type="GO" id="GO:0005886">
    <property type="term" value="C:plasma membrane"/>
    <property type="evidence" value="ECO:0007669"/>
    <property type="project" value="UniProtKB-SubCell"/>
</dbReference>
<dbReference type="GO" id="GO:0051539">
    <property type="term" value="F:4 iron, 4 sulfur cluster binding"/>
    <property type="evidence" value="ECO:0007669"/>
    <property type="project" value="UniProtKB-KW"/>
</dbReference>
<dbReference type="GO" id="GO:0005506">
    <property type="term" value="F:iron ion binding"/>
    <property type="evidence" value="ECO:0007669"/>
    <property type="project" value="UniProtKB-UniRule"/>
</dbReference>
<dbReference type="GO" id="GO:0050136">
    <property type="term" value="F:NADH:ubiquinone reductase (non-electrogenic) activity"/>
    <property type="evidence" value="ECO:0007669"/>
    <property type="project" value="UniProtKB-UniRule"/>
</dbReference>
<dbReference type="GO" id="GO:0048038">
    <property type="term" value="F:quinone binding"/>
    <property type="evidence" value="ECO:0007669"/>
    <property type="project" value="UniProtKB-KW"/>
</dbReference>
<dbReference type="GO" id="GO:0009060">
    <property type="term" value="P:aerobic respiration"/>
    <property type="evidence" value="ECO:0007669"/>
    <property type="project" value="TreeGrafter"/>
</dbReference>
<dbReference type="FunFam" id="3.30.70.3270:FF:000002">
    <property type="entry name" value="NADH-quinone oxidoreductase subunit I"/>
    <property type="match status" value="1"/>
</dbReference>
<dbReference type="Gene3D" id="3.30.70.3270">
    <property type="match status" value="1"/>
</dbReference>
<dbReference type="HAMAP" id="MF_01351">
    <property type="entry name" value="NDH1_NuoI"/>
    <property type="match status" value="1"/>
</dbReference>
<dbReference type="InterPro" id="IPR017896">
    <property type="entry name" value="4Fe4S_Fe-S-bd"/>
</dbReference>
<dbReference type="InterPro" id="IPR017900">
    <property type="entry name" value="4Fe4S_Fe_S_CS"/>
</dbReference>
<dbReference type="InterPro" id="IPR010226">
    <property type="entry name" value="NADH_quinone_OxRdtase_chainI"/>
</dbReference>
<dbReference type="NCBIfam" id="TIGR01971">
    <property type="entry name" value="NuoI"/>
    <property type="match status" value="1"/>
</dbReference>
<dbReference type="NCBIfam" id="NF004536">
    <property type="entry name" value="PRK05888.1-1"/>
    <property type="match status" value="1"/>
</dbReference>
<dbReference type="PANTHER" id="PTHR10849:SF20">
    <property type="entry name" value="NADH DEHYDROGENASE [UBIQUINONE] IRON-SULFUR PROTEIN 8, MITOCHONDRIAL"/>
    <property type="match status" value="1"/>
</dbReference>
<dbReference type="PANTHER" id="PTHR10849">
    <property type="entry name" value="NADH DEHYDROGENASE UBIQUINONE IRON-SULFUR PROTEIN 8, MITOCHONDRIAL"/>
    <property type="match status" value="1"/>
</dbReference>
<dbReference type="Pfam" id="PF12838">
    <property type="entry name" value="Fer4_7"/>
    <property type="match status" value="1"/>
</dbReference>
<dbReference type="SUPFAM" id="SSF54862">
    <property type="entry name" value="4Fe-4S ferredoxins"/>
    <property type="match status" value="1"/>
</dbReference>
<dbReference type="PROSITE" id="PS00198">
    <property type="entry name" value="4FE4S_FER_1"/>
    <property type="match status" value="2"/>
</dbReference>
<dbReference type="PROSITE" id="PS51379">
    <property type="entry name" value="4FE4S_FER_2"/>
    <property type="match status" value="2"/>
</dbReference>
<organism>
    <name type="scientific">Yersinia pestis (strain Pestoides F)</name>
    <dbReference type="NCBI Taxonomy" id="386656"/>
    <lineage>
        <taxon>Bacteria</taxon>
        <taxon>Pseudomonadati</taxon>
        <taxon>Pseudomonadota</taxon>
        <taxon>Gammaproteobacteria</taxon>
        <taxon>Enterobacterales</taxon>
        <taxon>Yersiniaceae</taxon>
        <taxon>Yersinia</taxon>
    </lineage>
</organism>
<gene>
    <name evidence="1" type="primary">nuoI</name>
    <name type="ordered locus">YPDSF_1958</name>
</gene>
<comment type="function">
    <text evidence="1">NDH-1 shuttles electrons from NADH, via FMN and iron-sulfur (Fe-S) centers, to quinones in the respiratory chain. The immediate electron acceptor for the enzyme in this species is believed to be ubiquinone. Couples the redox reaction to proton translocation (for every two electrons transferred, four hydrogen ions are translocated across the cytoplasmic membrane), and thus conserves the redox energy in a proton gradient.</text>
</comment>
<comment type="catalytic activity">
    <reaction evidence="1">
        <text>a quinone + NADH + 5 H(+)(in) = a quinol + NAD(+) + 4 H(+)(out)</text>
        <dbReference type="Rhea" id="RHEA:57888"/>
        <dbReference type="ChEBI" id="CHEBI:15378"/>
        <dbReference type="ChEBI" id="CHEBI:24646"/>
        <dbReference type="ChEBI" id="CHEBI:57540"/>
        <dbReference type="ChEBI" id="CHEBI:57945"/>
        <dbReference type="ChEBI" id="CHEBI:132124"/>
    </reaction>
</comment>
<comment type="cofactor">
    <cofactor evidence="1">
        <name>[4Fe-4S] cluster</name>
        <dbReference type="ChEBI" id="CHEBI:49883"/>
    </cofactor>
    <text evidence="1">Binds 2 [4Fe-4S] clusters per subunit.</text>
</comment>
<comment type="subunit">
    <text evidence="1">NDH-1 is composed of 13 different subunits. Subunits NuoA, H, J, K, L, M, N constitute the membrane sector of the complex.</text>
</comment>
<comment type="subcellular location">
    <subcellularLocation>
        <location evidence="1">Cell inner membrane</location>
        <topology evidence="1">Peripheral membrane protein</topology>
    </subcellularLocation>
</comment>
<comment type="similarity">
    <text evidence="1">Belongs to the complex I 23 kDa subunit family.</text>
</comment>
<feature type="chain" id="PRO_0000298564" description="NADH-quinone oxidoreductase subunit I">
    <location>
        <begin position="1"/>
        <end position="180"/>
    </location>
</feature>
<feature type="domain" description="4Fe-4S ferredoxin-type 1" evidence="1">
    <location>
        <begin position="50"/>
        <end position="80"/>
    </location>
</feature>
<feature type="domain" description="4Fe-4S ferredoxin-type 2" evidence="1">
    <location>
        <begin position="90"/>
        <end position="119"/>
    </location>
</feature>
<feature type="binding site" evidence="1">
    <location>
        <position position="60"/>
    </location>
    <ligand>
        <name>[4Fe-4S] cluster</name>
        <dbReference type="ChEBI" id="CHEBI:49883"/>
        <label>1</label>
    </ligand>
</feature>
<feature type="binding site" evidence="1">
    <location>
        <position position="63"/>
    </location>
    <ligand>
        <name>[4Fe-4S] cluster</name>
        <dbReference type="ChEBI" id="CHEBI:49883"/>
        <label>1</label>
    </ligand>
</feature>
<feature type="binding site" evidence="1">
    <location>
        <position position="66"/>
    </location>
    <ligand>
        <name>[4Fe-4S] cluster</name>
        <dbReference type="ChEBI" id="CHEBI:49883"/>
        <label>1</label>
    </ligand>
</feature>
<feature type="binding site" evidence="1">
    <location>
        <position position="70"/>
    </location>
    <ligand>
        <name>[4Fe-4S] cluster</name>
        <dbReference type="ChEBI" id="CHEBI:49883"/>
        <label>2</label>
    </ligand>
</feature>
<feature type="binding site" evidence="1">
    <location>
        <position position="99"/>
    </location>
    <ligand>
        <name>[4Fe-4S] cluster</name>
        <dbReference type="ChEBI" id="CHEBI:49883"/>
        <label>2</label>
    </ligand>
</feature>
<feature type="binding site" evidence="1">
    <location>
        <position position="102"/>
    </location>
    <ligand>
        <name>[4Fe-4S] cluster</name>
        <dbReference type="ChEBI" id="CHEBI:49883"/>
        <label>2</label>
    </ligand>
</feature>
<feature type="binding site" evidence="1">
    <location>
        <position position="105"/>
    </location>
    <ligand>
        <name>[4Fe-4S] cluster</name>
        <dbReference type="ChEBI" id="CHEBI:49883"/>
        <label>2</label>
    </ligand>
</feature>
<feature type="binding site" evidence="1">
    <location>
        <position position="109"/>
    </location>
    <ligand>
        <name>[4Fe-4S] cluster</name>
        <dbReference type="ChEBI" id="CHEBI:49883"/>
        <label>1</label>
    </ligand>
</feature>
<evidence type="ECO:0000255" key="1">
    <source>
        <dbReference type="HAMAP-Rule" id="MF_01351"/>
    </source>
</evidence>
<keyword id="KW-0004">4Fe-4S</keyword>
<keyword id="KW-0997">Cell inner membrane</keyword>
<keyword id="KW-1003">Cell membrane</keyword>
<keyword id="KW-0408">Iron</keyword>
<keyword id="KW-0411">Iron-sulfur</keyword>
<keyword id="KW-0472">Membrane</keyword>
<keyword id="KW-0479">Metal-binding</keyword>
<keyword id="KW-0520">NAD</keyword>
<keyword id="KW-0874">Quinone</keyword>
<keyword id="KW-0677">Repeat</keyword>
<keyword id="KW-1278">Translocase</keyword>
<keyword id="KW-0830">Ubiquinone</keyword>
<name>NUOI_YERPP</name>
<reference key="1">
    <citation type="submission" date="2007-02" db="EMBL/GenBank/DDBJ databases">
        <title>Complete sequence of chromosome of Yersinia pestis Pestoides F.</title>
        <authorList>
            <consortium name="US DOE Joint Genome Institute"/>
            <person name="Copeland A."/>
            <person name="Lucas S."/>
            <person name="Lapidus A."/>
            <person name="Barry K."/>
            <person name="Detter J.C."/>
            <person name="Glavina del Rio T."/>
            <person name="Hammon N."/>
            <person name="Israni S."/>
            <person name="Dalin E."/>
            <person name="Tice H."/>
            <person name="Pitluck S."/>
            <person name="Di Bartolo G."/>
            <person name="Chain P."/>
            <person name="Malfatti S."/>
            <person name="Shin M."/>
            <person name="Vergez L."/>
            <person name="Schmutz J."/>
            <person name="Larimer F."/>
            <person name="Land M."/>
            <person name="Hauser L."/>
            <person name="Worsham P."/>
            <person name="Chu M."/>
            <person name="Bearden S."/>
            <person name="Garcia E."/>
            <person name="Richardson P."/>
        </authorList>
    </citation>
    <scope>NUCLEOTIDE SEQUENCE [LARGE SCALE GENOMIC DNA]</scope>
    <source>
        <strain>Pestoides F</strain>
    </source>
</reference>
<accession>A4TM29</accession>
<protein>
    <recommendedName>
        <fullName evidence="1">NADH-quinone oxidoreductase subunit I</fullName>
        <ecNumber evidence="1">7.1.1.-</ecNumber>
    </recommendedName>
    <alternativeName>
        <fullName evidence="1">NADH dehydrogenase I subunit I</fullName>
    </alternativeName>
    <alternativeName>
        <fullName evidence="1">NDH-1 subunit I</fullName>
    </alternativeName>
</protein>
<proteinExistence type="inferred from homology"/>
<sequence>MTLKELVVGFGTQVRSLWMIGLHAFHKRETLMYPEEPVYLPPRYRGRIVLTRDPDGEERCVACNLCAVACPVGCISLQKAEQKDGRWYPEFFRINFSRCIFCGLCEEACPTTAIQLTPDFEMGEFKRQDLVYEKEDLLISGPGKYPEYNFYRMAGMAIDGKQKGEAENEAKPIDVKGLMP</sequence>